<name>MT1M_HUMAN</name>
<dbReference type="EMBL" id="AF136177">
    <property type="protein sequence ID" value="AAP97267.1"/>
    <property type="molecule type" value="mRNA"/>
</dbReference>
<dbReference type="EMBL" id="AF348671">
    <property type="protein sequence ID" value="AAL83902.1"/>
    <property type="molecule type" value="Genomic_DNA"/>
</dbReference>
<dbReference type="EMBL" id="BC028280">
    <property type="protein sequence ID" value="AAH28280.1"/>
    <property type="molecule type" value="mRNA"/>
</dbReference>
<dbReference type="EMBL" id="BC103841">
    <property type="protein sequence ID" value="AAI03842.1"/>
    <property type="molecule type" value="mRNA"/>
</dbReference>
<dbReference type="CCDS" id="CCDS42166.1"/>
<dbReference type="RefSeq" id="NP_789846.2">
    <property type="nucleotide sequence ID" value="NM_176870.3"/>
</dbReference>
<dbReference type="SMR" id="Q8N339"/>
<dbReference type="BioGRID" id="110605">
    <property type="interactions" value="17"/>
</dbReference>
<dbReference type="FunCoup" id="Q8N339">
    <property type="interactions" value="129"/>
</dbReference>
<dbReference type="IntAct" id="Q8N339">
    <property type="interactions" value="13"/>
</dbReference>
<dbReference type="STRING" id="9606.ENSP00000369146"/>
<dbReference type="DrugBank" id="DB09130">
    <property type="generic name" value="Copper"/>
</dbReference>
<dbReference type="DrugBank" id="DB12965">
    <property type="generic name" value="Silver"/>
</dbReference>
<dbReference type="GlyGen" id="Q8N339">
    <property type="glycosylation" value="1 site, 1 O-linked glycan (1 site)"/>
</dbReference>
<dbReference type="iPTMnet" id="Q8N339"/>
<dbReference type="PhosphoSitePlus" id="Q8N339"/>
<dbReference type="BioMuta" id="MT1M"/>
<dbReference type="DMDM" id="88913543"/>
<dbReference type="jPOST" id="Q8N339"/>
<dbReference type="MassIVE" id="Q8N339"/>
<dbReference type="PaxDb" id="9606-ENSP00000369146"/>
<dbReference type="PeptideAtlas" id="Q8N339"/>
<dbReference type="ProteomicsDB" id="71761"/>
<dbReference type="Antibodypedia" id="76223">
    <property type="antibodies" value="26 antibodies from 6 providers"/>
</dbReference>
<dbReference type="DNASU" id="4499"/>
<dbReference type="Ensembl" id="ENST00000379818.4">
    <property type="protein sequence ID" value="ENSP00000369146.3"/>
    <property type="gene ID" value="ENSG00000205364.4"/>
</dbReference>
<dbReference type="GeneID" id="4499"/>
<dbReference type="KEGG" id="hsa:4499"/>
<dbReference type="MANE-Select" id="ENST00000379818.4">
    <property type="protein sequence ID" value="ENSP00000369146.3"/>
    <property type="RefSeq nucleotide sequence ID" value="NM_176870.3"/>
    <property type="RefSeq protein sequence ID" value="NP_789846.2"/>
</dbReference>
<dbReference type="UCSC" id="uc002ejn.4">
    <property type="organism name" value="human"/>
</dbReference>
<dbReference type="AGR" id="HGNC:14296"/>
<dbReference type="CTD" id="4499"/>
<dbReference type="DisGeNET" id="4499"/>
<dbReference type="GeneCards" id="MT1M"/>
<dbReference type="HGNC" id="HGNC:14296">
    <property type="gene designation" value="MT1M"/>
</dbReference>
<dbReference type="HPA" id="ENSG00000205364">
    <property type="expression patterns" value="Tissue enhanced (adipose tissue, liver)"/>
</dbReference>
<dbReference type="MIM" id="156357">
    <property type="type" value="gene"/>
</dbReference>
<dbReference type="neXtProt" id="NX_Q8N339"/>
<dbReference type="OpenTargets" id="ENSG00000205364"/>
<dbReference type="PharmGKB" id="PA142671312"/>
<dbReference type="VEuPathDB" id="HostDB:ENSG00000205364"/>
<dbReference type="eggNOG" id="KOG4738">
    <property type="taxonomic scope" value="Eukaryota"/>
</dbReference>
<dbReference type="GeneTree" id="ENSGT00950000182967"/>
<dbReference type="HOGENOM" id="CLU_171204_2_0_1"/>
<dbReference type="InParanoid" id="Q8N339"/>
<dbReference type="OMA" id="CANCAKG"/>
<dbReference type="PAN-GO" id="Q8N339">
    <property type="GO annotations" value="8 GO annotations based on evolutionary models"/>
</dbReference>
<dbReference type="PhylomeDB" id="Q8N339"/>
<dbReference type="TreeFam" id="TF336054"/>
<dbReference type="PathwayCommons" id="Q8N339"/>
<dbReference type="Reactome" id="R-HSA-5661231">
    <property type="pathway name" value="Metallothioneins bind metals"/>
</dbReference>
<dbReference type="SignaLink" id="Q8N339"/>
<dbReference type="BioGRID-ORCS" id="4499">
    <property type="hits" value="19 hits in 1099 CRISPR screens"/>
</dbReference>
<dbReference type="GeneWiki" id="MT1M"/>
<dbReference type="GenomeRNAi" id="4499"/>
<dbReference type="Pharos" id="Q8N339">
    <property type="development level" value="Tbio"/>
</dbReference>
<dbReference type="PRO" id="PR:Q8N339"/>
<dbReference type="Proteomes" id="UP000005640">
    <property type="component" value="Chromosome 16"/>
</dbReference>
<dbReference type="RNAct" id="Q8N339">
    <property type="molecule type" value="protein"/>
</dbReference>
<dbReference type="Bgee" id="ENSG00000205364">
    <property type="expression patterns" value="Expressed in mucosa of transverse colon and 165 other cell types or tissues"/>
</dbReference>
<dbReference type="ExpressionAtlas" id="Q8N339">
    <property type="expression patterns" value="baseline and differential"/>
</dbReference>
<dbReference type="GO" id="GO:0005737">
    <property type="term" value="C:cytoplasm"/>
    <property type="evidence" value="ECO:0000250"/>
    <property type="project" value="UniProtKB"/>
</dbReference>
<dbReference type="GO" id="GO:0005634">
    <property type="term" value="C:nucleus"/>
    <property type="evidence" value="ECO:0000250"/>
    <property type="project" value="UniProtKB"/>
</dbReference>
<dbReference type="GO" id="GO:0046872">
    <property type="term" value="F:metal ion binding"/>
    <property type="evidence" value="ECO:0000318"/>
    <property type="project" value="GO_Central"/>
</dbReference>
<dbReference type="GO" id="GO:0008270">
    <property type="term" value="F:zinc ion binding"/>
    <property type="evidence" value="ECO:0000250"/>
    <property type="project" value="UniProtKB"/>
</dbReference>
<dbReference type="GO" id="GO:0071276">
    <property type="term" value="P:cellular response to cadmium ion"/>
    <property type="evidence" value="ECO:0000318"/>
    <property type="project" value="GO_Central"/>
</dbReference>
<dbReference type="GO" id="GO:0071280">
    <property type="term" value="P:cellular response to copper ion"/>
    <property type="evidence" value="ECO:0000318"/>
    <property type="project" value="GO_Central"/>
</dbReference>
<dbReference type="GO" id="GO:0071294">
    <property type="term" value="P:cellular response to zinc ion"/>
    <property type="evidence" value="ECO:0000250"/>
    <property type="project" value="UniProtKB"/>
</dbReference>
<dbReference type="GO" id="GO:0010273">
    <property type="term" value="P:detoxification of copper ion"/>
    <property type="evidence" value="ECO:0000318"/>
    <property type="project" value="GO_Central"/>
</dbReference>
<dbReference type="GO" id="GO:0006882">
    <property type="term" value="P:intracellular zinc ion homeostasis"/>
    <property type="evidence" value="ECO:0000318"/>
    <property type="project" value="GO_Central"/>
</dbReference>
<dbReference type="GO" id="GO:0045926">
    <property type="term" value="P:negative regulation of growth"/>
    <property type="evidence" value="ECO:0000250"/>
    <property type="project" value="UniProtKB"/>
</dbReference>
<dbReference type="FunFam" id="4.10.10.10:FF:000001">
    <property type="entry name" value="Metallothionein"/>
    <property type="match status" value="1"/>
</dbReference>
<dbReference type="Gene3D" id="4.10.10.10">
    <property type="entry name" value="Metallothionein Isoform II"/>
    <property type="match status" value="1"/>
</dbReference>
<dbReference type="InterPro" id="IPR017854">
    <property type="entry name" value="Metalthion_dom_sf"/>
</dbReference>
<dbReference type="InterPro" id="IPR023587">
    <property type="entry name" value="Metalthion_dom_sf_vert"/>
</dbReference>
<dbReference type="InterPro" id="IPR000006">
    <property type="entry name" value="Metalthion_vert"/>
</dbReference>
<dbReference type="InterPro" id="IPR018064">
    <property type="entry name" value="Metalthion_vert_metal_BS"/>
</dbReference>
<dbReference type="PANTHER" id="PTHR23299">
    <property type="entry name" value="METALLOTHIONEIN"/>
    <property type="match status" value="1"/>
</dbReference>
<dbReference type="PANTHER" id="PTHR23299:SF48">
    <property type="entry name" value="METALLOTHIONEIN-1E-RELATED"/>
    <property type="match status" value="1"/>
</dbReference>
<dbReference type="Pfam" id="PF00131">
    <property type="entry name" value="Metallothio"/>
    <property type="match status" value="1"/>
</dbReference>
<dbReference type="PRINTS" id="PR00860">
    <property type="entry name" value="MTVERTEBRATE"/>
</dbReference>
<dbReference type="SUPFAM" id="SSF57868">
    <property type="entry name" value="Metallothionein"/>
    <property type="match status" value="1"/>
</dbReference>
<dbReference type="PROSITE" id="PS00203">
    <property type="entry name" value="METALLOTHIONEIN_VRT"/>
    <property type="match status" value="1"/>
</dbReference>
<organism>
    <name type="scientific">Homo sapiens</name>
    <name type="common">Human</name>
    <dbReference type="NCBI Taxonomy" id="9606"/>
    <lineage>
        <taxon>Eukaryota</taxon>
        <taxon>Metazoa</taxon>
        <taxon>Chordata</taxon>
        <taxon>Craniata</taxon>
        <taxon>Vertebrata</taxon>
        <taxon>Euteleostomi</taxon>
        <taxon>Mammalia</taxon>
        <taxon>Eutheria</taxon>
        <taxon>Euarchontoglires</taxon>
        <taxon>Primates</taxon>
        <taxon>Haplorrhini</taxon>
        <taxon>Catarrhini</taxon>
        <taxon>Hominidae</taxon>
        <taxon>Homo</taxon>
    </lineage>
</organism>
<protein>
    <recommendedName>
        <fullName>Metallothionein-1M</fullName>
        <shortName>MT-1M</shortName>
    </recommendedName>
    <alternativeName>
        <fullName>Metallothionein-IM</fullName>
        <shortName>MT-IM</shortName>
    </alternativeName>
</protein>
<reference key="1">
    <citation type="submission" date="1999-03" db="EMBL/GenBank/DDBJ databases">
        <title>Cloning of a new human cDNA homologous to monkey metallothionein.</title>
        <authorList>
            <person name="Li N.G."/>
            <person name="Yu L."/>
            <person name="Zhao S.Y."/>
        </authorList>
    </citation>
    <scope>NUCLEOTIDE SEQUENCE [MRNA]</scope>
    <scope>VARIANT LYS-20</scope>
</reference>
<reference key="2">
    <citation type="submission" date="2001-02" db="EMBL/GenBank/DDBJ databases">
        <title>Cloning of a novel member of the MT gene family -- MT1M.</title>
        <authorList>
            <person name="Wang J."/>
            <person name="Yu L."/>
            <person name="Zhao S."/>
        </authorList>
    </citation>
    <scope>NUCLEOTIDE SEQUENCE [GENOMIC DNA]</scope>
</reference>
<reference key="3">
    <citation type="journal article" date="2004" name="Genome Res.">
        <title>The status, quality, and expansion of the NIH full-length cDNA project: the Mammalian Gene Collection (MGC).</title>
        <authorList>
            <consortium name="The MGC Project Team"/>
        </authorList>
    </citation>
    <scope>NUCLEOTIDE SEQUENCE [LARGE SCALE MRNA]</scope>
    <scope>VARIANT LYS-20</scope>
    <source>
        <tissue>Colon</tissue>
    </source>
</reference>
<proteinExistence type="evidence at protein level"/>
<feature type="chain" id="PRO_0000223180" description="Metallothionein-1M">
    <location>
        <begin position="1"/>
        <end position="61"/>
    </location>
</feature>
<feature type="region of interest" description="Beta">
    <location>
        <begin position="1"/>
        <end position="29"/>
    </location>
</feature>
<feature type="region of interest" description="Alpha">
    <location>
        <begin position="30"/>
        <end position="61"/>
    </location>
</feature>
<feature type="binding site" evidence="2">
    <location>
        <position position="5"/>
    </location>
    <ligand>
        <name>a divalent metal cation</name>
        <dbReference type="ChEBI" id="CHEBI:60240"/>
        <label>1</label>
        <note>in cluster B</note>
    </ligand>
</feature>
<feature type="binding site" evidence="2">
    <location>
        <position position="7"/>
    </location>
    <ligand>
        <name>a divalent metal cation</name>
        <dbReference type="ChEBI" id="CHEBI:60240"/>
        <label>1</label>
        <note>in cluster B</note>
    </ligand>
</feature>
<feature type="binding site" evidence="2">
    <location>
        <position position="7"/>
    </location>
    <ligand>
        <name>a divalent metal cation</name>
        <dbReference type="ChEBI" id="CHEBI:60240"/>
        <label>2</label>
        <note>in cluster B</note>
    </ligand>
</feature>
<feature type="binding site" evidence="2">
    <location>
        <position position="13"/>
    </location>
    <ligand>
        <name>a divalent metal cation</name>
        <dbReference type="ChEBI" id="CHEBI:60240"/>
        <label>2</label>
        <note>in cluster B</note>
    </ligand>
</feature>
<feature type="binding site" evidence="2">
    <location>
        <position position="15"/>
    </location>
    <ligand>
        <name>a divalent metal cation</name>
        <dbReference type="ChEBI" id="CHEBI:60240"/>
        <label>2</label>
        <note>in cluster B</note>
    </ligand>
</feature>
<feature type="binding site" evidence="2">
    <location>
        <position position="15"/>
    </location>
    <ligand>
        <name>a divalent metal cation</name>
        <dbReference type="ChEBI" id="CHEBI:60240"/>
        <label>3</label>
        <note>in cluster B</note>
    </ligand>
</feature>
<feature type="binding site" evidence="2">
    <location>
        <position position="19"/>
    </location>
    <ligand>
        <name>a divalent metal cation</name>
        <dbReference type="ChEBI" id="CHEBI:60240"/>
        <label>3</label>
        <note>in cluster B</note>
    </ligand>
</feature>
<feature type="binding site" evidence="2">
    <location>
        <position position="21"/>
    </location>
    <ligand>
        <name>a divalent metal cation</name>
        <dbReference type="ChEBI" id="CHEBI:60240"/>
        <label>1</label>
        <note>in cluster B</note>
    </ligand>
</feature>
<feature type="binding site" evidence="2">
    <location>
        <position position="24"/>
    </location>
    <ligand>
        <name>a divalent metal cation</name>
        <dbReference type="ChEBI" id="CHEBI:60240"/>
        <label>1</label>
        <note>in cluster B</note>
    </ligand>
</feature>
<feature type="binding site" evidence="2">
    <location>
        <position position="24"/>
    </location>
    <ligand>
        <name>a divalent metal cation</name>
        <dbReference type="ChEBI" id="CHEBI:60240"/>
        <label>3</label>
        <note>in cluster B</note>
    </ligand>
</feature>
<feature type="binding site" evidence="2">
    <location>
        <position position="26"/>
    </location>
    <ligand>
        <name>a divalent metal cation</name>
        <dbReference type="ChEBI" id="CHEBI:60240"/>
        <label>2</label>
        <note>in cluster B</note>
    </ligand>
</feature>
<feature type="binding site" evidence="2">
    <location>
        <position position="29"/>
    </location>
    <ligand>
        <name>a divalent metal cation</name>
        <dbReference type="ChEBI" id="CHEBI:60240"/>
        <label>3</label>
        <note>in cluster B</note>
    </ligand>
</feature>
<feature type="binding site" evidence="2">
    <location>
        <position position="33"/>
    </location>
    <ligand>
        <name>a divalent metal cation</name>
        <dbReference type="ChEBI" id="CHEBI:60240"/>
        <label>4</label>
        <note>in cluster A</note>
    </ligand>
</feature>
<feature type="binding site" evidence="2">
    <location>
        <position position="34"/>
    </location>
    <ligand>
        <name>a divalent metal cation</name>
        <dbReference type="ChEBI" id="CHEBI:60240"/>
        <label>4</label>
        <note>in cluster A</note>
    </ligand>
</feature>
<feature type="binding site" evidence="2">
    <location>
        <position position="34"/>
    </location>
    <ligand>
        <name>a divalent metal cation</name>
        <dbReference type="ChEBI" id="CHEBI:60240"/>
        <label>5</label>
        <note>in cluster A</note>
    </ligand>
</feature>
<feature type="binding site" evidence="2">
    <location>
        <position position="36"/>
    </location>
    <ligand>
        <name>a divalent metal cation</name>
        <dbReference type="ChEBI" id="CHEBI:60240"/>
        <label>5</label>
        <note>in cluster A</note>
    </ligand>
</feature>
<feature type="binding site" evidence="2">
    <location>
        <position position="37"/>
    </location>
    <ligand>
        <name>a divalent metal cation</name>
        <dbReference type="ChEBI" id="CHEBI:60240"/>
        <label>5</label>
        <note>in cluster A</note>
    </ligand>
</feature>
<feature type="binding site" evidence="2">
    <location>
        <position position="37"/>
    </location>
    <ligand>
        <name>a divalent metal cation</name>
        <dbReference type="ChEBI" id="CHEBI:60240"/>
        <label>6</label>
        <note>in cluster A</note>
    </ligand>
</feature>
<feature type="binding site" evidence="2">
    <location>
        <position position="41"/>
    </location>
    <ligand>
        <name>a divalent metal cation</name>
        <dbReference type="ChEBI" id="CHEBI:60240"/>
        <label>6</label>
        <note>in cluster A</note>
    </ligand>
</feature>
<feature type="binding site" evidence="2">
    <location>
        <position position="44"/>
    </location>
    <ligand>
        <name>a divalent metal cation</name>
        <dbReference type="ChEBI" id="CHEBI:60240"/>
        <label>4</label>
        <note>in cluster A</note>
    </ligand>
</feature>
<feature type="binding site" evidence="2">
    <location>
        <position position="44"/>
    </location>
    <ligand>
        <name>a divalent metal cation</name>
        <dbReference type="ChEBI" id="CHEBI:60240"/>
        <label>6</label>
        <note>in cluster A</note>
    </ligand>
</feature>
<feature type="binding site" evidence="2">
    <location>
        <position position="48"/>
    </location>
    <ligand>
        <name>a divalent metal cation</name>
        <dbReference type="ChEBI" id="CHEBI:60240"/>
        <label>4</label>
        <note>in cluster A</note>
    </ligand>
</feature>
<feature type="binding site" evidence="2">
    <location>
        <position position="50"/>
    </location>
    <ligand>
        <name>a divalent metal cation</name>
        <dbReference type="ChEBI" id="CHEBI:60240"/>
        <label>5</label>
        <note>in cluster A</note>
    </ligand>
</feature>
<feature type="binding site" evidence="2">
    <location>
        <position position="50"/>
    </location>
    <ligand>
        <name>a divalent metal cation</name>
        <dbReference type="ChEBI" id="CHEBI:60240"/>
        <label>7</label>
        <note>in cluster A</note>
    </ligand>
</feature>
<feature type="binding site" evidence="2">
    <location>
        <position position="57"/>
    </location>
    <ligand>
        <name>a divalent metal cation</name>
        <dbReference type="ChEBI" id="CHEBI:60240"/>
        <label>7</label>
        <note>in cluster A</note>
    </ligand>
</feature>
<feature type="binding site" evidence="2">
    <location>
        <position position="59"/>
    </location>
    <ligand>
        <name>a divalent metal cation</name>
        <dbReference type="ChEBI" id="CHEBI:60240"/>
        <label>7</label>
        <note>in cluster A</note>
    </ligand>
</feature>
<feature type="binding site" evidence="2">
    <location>
        <position position="60"/>
    </location>
    <ligand>
        <name>a divalent metal cation</name>
        <dbReference type="ChEBI" id="CHEBI:60240"/>
        <label>6</label>
        <note>in cluster A</note>
    </ligand>
</feature>
<feature type="binding site" evidence="2">
    <location>
        <position position="60"/>
    </location>
    <ligand>
        <name>a divalent metal cation</name>
        <dbReference type="ChEBI" id="CHEBI:60240"/>
        <label>7</label>
        <note>in cluster A</note>
    </ligand>
</feature>
<feature type="sequence variant" id="VAR_025310" description="In dbSNP:rs1827210." evidence="3 4">
    <original>T</original>
    <variation>K</variation>
    <location>
        <position position="20"/>
    </location>
</feature>
<keyword id="KW-0104">Cadmium</keyword>
<keyword id="KW-0186">Copper</keyword>
<keyword id="KW-0479">Metal-binding</keyword>
<keyword id="KW-0480">Metal-thiolate cluster</keyword>
<keyword id="KW-1267">Proteomics identification</keyword>
<keyword id="KW-1185">Reference proteome</keyword>
<keyword id="KW-0862">Zinc</keyword>
<evidence type="ECO:0000250" key="1"/>
<evidence type="ECO:0000250" key="2">
    <source>
        <dbReference type="UniProtKB" id="P02795"/>
    </source>
</evidence>
<evidence type="ECO:0000269" key="3">
    <source>
    </source>
</evidence>
<evidence type="ECO:0000269" key="4">
    <source ref="1"/>
</evidence>
<evidence type="ECO:0000305" key="5"/>
<accession>Q8N339</accession>
<accession>Q8TDN3</accession>
<gene>
    <name type="primary">MT1M</name>
    <name type="synonym">MT1K</name>
</gene>
<comment type="function">
    <text>Metallothioneins have a high content of cysteine residues that bind various heavy metals; these proteins are transcriptionally regulated by both heavy metals and glucocorticoids.</text>
</comment>
<comment type="subunit">
    <text evidence="1">Monomer.</text>
</comment>
<comment type="interaction">
    <interactant intactId="EBI-3911571">
        <id>Q8N339</id>
    </interactant>
    <interactant intactId="EBI-3867333">
        <id>A8MQ03</id>
        <label>CYSRT1</label>
    </interactant>
    <organismsDiffer>false</organismsDiffer>
    <experiments>3</experiments>
</comment>
<comment type="interaction">
    <interactant intactId="EBI-3911571">
        <id>Q8N339</id>
    </interactant>
    <interactant intactId="EBI-742054">
        <id>Q96D03</id>
        <label>DDIT4L</label>
    </interactant>
    <organismsDiffer>false</organismsDiffer>
    <experiments>3</experiments>
</comment>
<comment type="interaction">
    <interactant intactId="EBI-3911571">
        <id>Q8N339</id>
    </interactant>
    <interactant intactId="EBI-11988175">
        <id>Q9BYP8</id>
        <label>KRTAP17-1</label>
    </interactant>
    <organismsDiffer>false</organismsDiffer>
    <experiments>3</experiments>
</comment>
<comment type="interaction">
    <interactant intactId="EBI-3911571">
        <id>Q8N339</id>
    </interactant>
    <interactant intactId="EBI-12074540">
        <id>Q6L8H4</id>
        <label>KRTAP5-1</label>
    </interactant>
    <organismsDiffer>false</organismsDiffer>
    <experiments>3</experiments>
</comment>
<comment type="interaction">
    <interactant intactId="EBI-3911571">
        <id>Q8N339</id>
    </interactant>
    <interactant intactId="EBI-3958099">
        <id>P26371</id>
        <label>KRTAP5-9</label>
    </interactant>
    <organismsDiffer>false</organismsDiffer>
    <experiments>3</experiments>
</comment>
<comment type="interaction">
    <interactant intactId="EBI-3911571">
        <id>Q8N339</id>
    </interactant>
    <interactant intactId="EBI-750494">
        <id>P49901</id>
        <label>SMCP</label>
    </interactant>
    <organismsDiffer>false</organismsDiffer>
    <experiments>3</experiments>
</comment>
<comment type="domain">
    <text>Class I metallothioneins contain 2 metal-binding domains: four divalent ions are chelated within cluster A of the alpha domain and are coordinated via cysteinyl thiolate bridges to 11 cysteine ligands. Cluster B, the corresponding region within the beta domain, can ligate three divalent ions to 9 cysteines.</text>
</comment>
<comment type="similarity">
    <text evidence="5">Belongs to the metallothionein superfamily. Type 1 family.</text>
</comment>
<sequence length="61" mass="6110">MDPNCSCTTGVSCACTGSCTCKECKCTSCKKSCCSCCPVGCAKCAHGCVCKGTLENCSCCA</sequence>